<keyword id="KW-0046">Antibiotic resistance</keyword>
<keyword id="KW-1003">Cell membrane</keyword>
<keyword id="KW-0472">Membrane</keyword>
<keyword id="KW-0812">Transmembrane</keyword>
<keyword id="KW-1133">Transmembrane helix</keyword>
<keyword id="KW-0813">Transport</keyword>
<proteinExistence type="inferred from homology"/>
<organism>
    <name type="scientific">Staphylococcus aureus (strain Mu3 / ATCC 700698)</name>
    <dbReference type="NCBI Taxonomy" id="418127"/>
    <lineage>
        <taxon>Bacteria</taxon>
        <taxon>Bacillati</taxon>
        <taxon>Bacillota</taxon>
        <taxon>Bacilli</taxon>
        <taxon>Bacillales</taxon>
        <taxon>Staphylococcaceae</taxon>
        <taxon>Staphylococcus</taxon>
    </lineage>
</organism>
<name>NORB_STAA1</name>
<protein>
    <recommendedName>
        <fullName>Quinolone resistance protein NorB</fullName>
    </recommendedName>
</protein>
<feature type="chain" id="PRO_0000361960" description="Quinolone resistance protein NorB">
    <location>
        <begin position="1"/>
        <end position="463"/>
    </location>
</feature>
<feature type="transmembrane region" description="Helical" evidence="2">
    <location>
        <begin position="17"/>
        <end position="37"/>
    </location>
</feature>
<feature type="transmembrane region" description="Helical" evidence="2">
    <location>
        <begin position="53"/>
        <end position="73"/>
    </location>
</feature>
<feature type="transmembrane region" description="Helical" evidence="2">
    <location>
        <begin position="86"/>
        <end position="106"/>
    </location>
</feature>
<feature type="transmembrane region" description="Helical" evidence="2">
    <location>
        <begin position="107"/>
        <end position="127"/>
    </location>
</feature>
<feature type="transmembrane region" description="Helical" evidence="2">
    <location>
        <begin position="142"/>
        <end position="162"/>
    </location>
</feature>
<feature type="transmembrane region" description="Helical" evidence="2">
    <location>
        <begin position="165"/>
        <end position="185"/>
    </location>
</feature>
<feature type="transmembrane region" description="Helical" evidence="2">
    <location>
        <begin position="201"/>
        <end position="221"/>
    </location>
</feature>
<feature type="transmembrane region" description="Helical" evidence="2">
    <location>
        <begin position="230"/>
        <end position="250"/>
    </location>
</feature>
<feature type="transmembrane region" description="Helical" evidence="2">
    <location>
        <begin position="273"/>
        <end position="293"/>
    </location>
</feature>
<feature type="transmembrane region" description="Helical" evidence="2">
    <location>
        <begin position="299"/>
        <end position="319"/>
    </location>
</feature>
<feature type="transmembrane region" description="Helical" evidence="2">
    <location>
        <begin position="334"/>
        <end position="354"/>
    </location>
</feature>
<feature type="transmembrane region" description="Helical" evidence="2">
    <location>
        <begin position="357"/>
        <end position="377"/>
    </location>
</feature>
<feature type="transmembrane region" description="Helical" evidence="2">
    <location>
        <begin position="403"/>
        <end position="423"/>
    </location>
</feature>
<feature type="transmembrane region" description="Helical" evidence="2">
    <location>
        <begin position="435"/>
        <end position="455"/>
    </location>
</feature>
<gene>
    <name type="primary">norB</name>
    <name type="ordered locus">SAHV_1424</name>
</gene>
<evidence type="ECO:0000250" key="1"/>
<evidence type="ECO:0000255" key="2"/>
<evidence type="ECO:0000305" key="3"/>
<sequence>MEKPSREAFEGNNKLLIGIVLSVITFWLFAQSLVNVVPILEDSFNTDIGTVNIAVSITALFSGMFVVGAGGLADKYGRIKLTNIGIILNILGSLLIIISNIPLLLIIGRLIQGLSAACIMPATLSIIKSYYIGKDRQRALSYWSIGSWGGSGVCSFFGGAVATLLGWRWIFILSIIISLIALFLIKGTPETKSKSISLNKFDIKGLVLLVIMLLTLNILITKGSELGVTSLLFITLLAIAIGSFSLFIVLEKRATNPLIDFKLFKNKAYTGATASNFLLNGVAGTLIVANTFVQRGLGYSSLQAGSLSITYLVMVLIMIRVGEKLLQTLGCKKPMLIGTGVLIVGECLISLTFLPEILYVICCIIGYLFFGLGLGIYATPSTDTAIANAPLEKVGVAAGIYKMASALGGAFGVALSGAVYAIVSNMTNIYTGAMIALWLNAGMGILSFVIILLLVPKQNDTQL</sequence>
<dbReference type="EMBL" id="AP009324">
    <property type="protein sequence ID" value="BAF78307.1"/>
    <property type="molecule type" value="Genomic_DNA"/>
</dbReference>
<dbReference type="RefSeq" id="WP_000414695.1">
    <property type="nucleotide sequence ID" value="NC_009782.1"/>
</dbReference>
<dbReference type="SMR" id="A7X2C6"/>
<dbReference type="KEGG" id="saw:SAHV_1424"/>
<dbReference type="HOGENOM" id="CLU_000960_28_3_9"/>
<dbReference type="GO" id="GO:0005886">
    <property type="term" value="C:plasma membrane"/>
    <property type="evidence" value="ECO:0007669"/>
    <property type="project" value="UniProtKB-SubCell"/>
</dbReference>
<dbReference type="GO" id="GO:0022857">
    <property type="term" value="F:transmembrane transporter activity"/>
    <property type="evidence" value="ECO:0007669"/>
    <property type="project" value="InterPro"/>
</dbReference>
<dbReference type="GO" id="GO:0046677">
    <property type="term" value="P:response to antibiotic"/>
    <property type="evidence" value="ECO:0007669"/>
    <property type="project" value="UniProtKB-KW"/>
</dbReference>
<dbReference type="CDD" id="cd17321">
    <property type="entry name" value="MFS_MMR_MDR_like"/>
    <property type="match status" value="1"/>
</dbReference>
<dbReference type="FunFam" id="1.20.1250.20:FF:000252">
    <property type="entry name" value="Quinolone resistance protein NorB"/>
    <property type="match status" value="1"/>
</dbReference>
<dbReference type="FunFam" id="1.20.1720.10:FF:000015">
    <property type="entry name" value="Quinolone resistance protein NorB"/>
    <property type="match status" value="1"/>
</dbReference>
<dbReference type="Gene3D" id="1.20.1250.20">
    <property type="entry name" value="MFS general substrate transporter like domains"/>
    <property type="match status" value="1"/>
</dbReference>
<dbReference type="Gene3D" id="1.20.1720.10">
    <property type="entry name" value="Multidrug resistance protein D"/>
    <property type="match status" value="1"/>
</dbReference>
<dbReference type="InterPro" id="IPR011701">
    <property type="entry name" value="MFS"/>
</dbReference>
<dbReference type="InterPro" id="IPR020846">
    <property type="entry name" value="MFS_dom"/>
</dbReference>
<dbReference type="InterPro" id="IPR036259">
    <property type="entry name" value="MFS_trans_sf"/>
</dbReference>
<dbReference type="PANTHER" id="PTHR42718">
    <property type="entry name" value="MAJOR FACILITATOR SUPERFAMILY MULTIDRUG TRANSPORTER MFSC"/>
    <property type="match status" value="1"/>
</dbReference>
<dbReference type="PANTHER" id="PTHR42718:SF9">
    <property type="entry name" value="MAJOR FACILITATOR SUPERFAMILY MULTIDRUG TRANSPORTER MFSC"/>
    <property type="match status" value="1"/>
</dbReference>
<dbReference type="Pfam" id="PF07690">
    <property type="entry name" value="MFS_1"/>
    <property type="match status" value="1"/>
</dbReference>
<dbReference type="SUPFAM" id="SSF103473">
    <property type="entry name" value="MFS general substrate transporter"/>
    <property type="match status" value="1"/>
</dbReference>
<dbReference type="PROSITE" id="PS50850">
    <property type="entry name" value="MFS"/>
    <property type="match status" value="1"/>
</dbReference>
<reference key="1">
    <citation type="journal article" date="2008" name="Antimicrob. Agents Chemother.">
        <title>Mutated response regulator graR is responsible for phenotypic conversion of Staphylococcus aureus from heterogeneous vancomycin-intermediate resistance to vancomycin-intermediate resistance.</title>
        <authorList>
            <person name="Neoh H.-M."/>
            <person name="Cui L."/>
            <person name="Yuzawa H."/>
            <person name="Takeuchi F."/>
            <person name="Matsuo M."/>
            <person name="Hiramatsu K."/>
        </authorList>
    </citation>
    <scope>NUCLEOTIDE SEQUENCE [LARGE SCALE GENOMIC DNA]</scope>
    <source>
        <strain>Mu3 / ATCC 700698</strain>
    </source>
</reference>
<comment type="function">
    <text evidence="1">Multidrug efflux pump that acts independently of NorA and is one of the factors that confers resistance against diverse quinolones and chemical compounds.</text>
</comment>
<comment type="subcellular location">
    <subcellularLocation>
        <location evidence="3">Cell membrane</location>
        <topology evidence="3">Multi-pass membrane protein</topology>
    </subcellularLocation>
</comment>
<comment type="similarity">
    <text evidence="3">Belongs to the major facilitator superfamily. TCR/Tet family.</text>
</comment>
<accession>A7X2C6</accession>